<reference key="1">
    <citation type="journal article" date="2002" name="J. Biol. Chem.">
        <title>Molecular cloning and characterization of a novel UDP-Gal:GalNAc(alpha) peptide beta 1,3-galactosyltransferase (C1Gal-T2), an enzyme synthesizing a core 1 structure of O-glycan.</title>
        <authorList>
            <person name="Kudo T."/>
            <person name="Iwai T."/>
            <person name="Kubota T."/>
            <person name="Iwasaki H."/>
            <person name="Takayma Y."/>
            <person name="Hiruma T."/>
            <person name="Inaba N."/>
            <person name="Zhang Y."/>
            <person name="Gotoh M."/>
            <person name="Togayachi A."/>
            <person name="Narimatsu H."/>
        </authorList>
    </citation>
    <scope>NUCLEOTIDE SEQUENCE [MRNA]</scope>
    <scope>TISSUE SPECIFICITY</scope>
</reference>
<reference key="2">
    <citation type="journal article" date="2006" name="J. Biol. Chem.">
        <authorList>
            <person name="Kudo T."/>
            <person name="Iwai T."/>
            <person name="Kubota T."/>
            <person name="Iwasaki H."/>
            <person name="Takayma Y."/>
            <person name="Hiruma T."/>
            <person name="Inaba N."/>
            <person name="Zhang Y."/>
            <person name="Gotoh M."/>
            <person name="Togayachi A."/>
            <person name="Narimatsu H."/>
        </authorList>
    </citation>
    <scope>ERRATUM OF PUBMED:12361956</scope>
</reference>
<reference key="3">
    <citation type="journal article" date="2002" name="Proc. Natl. Acad. Sci. U.S.A.">
        <title>A unique molecular chaperone Cosmc required for activity of the mammalian core 1 beta 3-galactosyltransferase.</title>
        <authorList>
            <person name="Ju T."/>
            <person name="Cummings R.D."/>
        </authorList>
    </citation>
    <scope>NUCLEOTIDE SEQUENCE [MRNA]</scope>
    <scope>FUNCTION</scope>
    <scope>INTERACTION WITH C1GALT1</scope>
</reference>
<reference key="4">
    <citation type="submission" date="1999-04" db="EMBL/GenBank/DDBJ databases">
        <title>Identification and characterization of C38H2-L1.</title>
        <authorList>
            <person name="Rubboli F."/>
            <person name="Marchitiello A."/>
            <person name="Ballabio A."/>
            <person name="Banfi S."/>
        </authorList>
    </citation>
    <scope>NUCLEOTIDE SEQUENCE [MRNA]</scope>
</reference>
<reference key="5">
    <citation type="journal article" date="2000" name="Genome Res.">
        <title>Cloning and functional analysis of cDNAs with open reading frames for 300 previously undefined genes expressed in CD34+ hematopoietic stem/progenitor cells.</title>
        <authorList>
            <person name="Zhang Q.-H."/>
            <person name="Ye M."/>
            <person name="Wu X.-Y."/>
            <person name="Ren S.-X."/>
            <person name="Zhao M."/>
            <person name="Zhao C.-J."/>
            <person name="Fu G."/>
            <person name="Shen Y."/>
            <person name="Fan H.-Y."/>
            <person name="Lu G."/>
            <person name="Zhong M."/>
            <person name="Xu X.-R."/>
            <person name="Han Z.-G."/>
            <person name="Zhang J.-W."/>
            <person name="Tao J."/>
            <person name="Huang Q.-H."/>
            <person name="Zhou J."/>
            <person name="Hu G.-X."/>
            <person name="Gu J."/>
            <person name="Chen S.-J."/>
            <person name="Chen Z."/>
        </authorList>
    </citation>
    <scope>NUCLEOTIDE SEQUENCE [LARGE SCALE MRNA]</scope>
    <source>
        <tissue>Umbilical cord blood</tissue>
    </source>
</reference>
<reference key="6">
    <citation type="submission" date="1999-08" db="EMBL/GenBank/DDBJ databases">
        <authorList>
            <person name="Qin B.M."/>
            <person name="Sheng H."/>
            <person name="Liu B."/>
            <person name="Zhao B."/>
            <person name="Liu Y.Q."/>
            <person name="Wang X.Y."/>
            <person name="Zhang Q."/>
            <person name="Song L."/>
            <person name="Liu B.H."/>
            <person name="Lu H."/>
            <person name="Xu H.S."/>
            <person name="Zheng W.Y."/>
            <person name="Gong J."/>
            <person name="Hui R.T."/>
        </authorList>
    </citation>
    <scope>NUCLEOTIDE SEQUENCE [LARGE SCALE MRNA]</scope>
    <source>
        <tissue>Aorta</tissue>
    </source>
</reference>
<reference key="7">
    <citation type="journal article" date="2003" name="Genome Res.">
        <title>The secreted protein discovery initiative (SPDI), a large-scale effort to identify novel human secreted and transmembrane proteins: a bioinformatics assessment.</title>
        <authorList>
            <person name="Clark H.F."/>
            <person name="Gurney A.L."/>
            <person name="Abaya E."/>
            <person name="Baker K."/>
            <person name="Baldwin D.T."/>
            <person name="Brush J."/>
            <person name="Chen J."/>
            <person name="Chow B."/>
            <person name="Chui C."/>
            <person name="Crowley C."/>
            <person name="Currell B."/>
            <person name="Deuel B."/>
            <person name="Dowd P."/>
            <person name="Eaton D."/>
            <person name="Foster J.S."/>
            <person name="Grimaldi C."/>
            <person name="Gu Q."/>
            <person name="Hass P.E."/>
            <person name="Heldens S."/>
            <person name="Huang A."/>
            <person name="Kim H.S."/>
            <person name="Klimowski L."/>
            <person name="Jin Y."/>
            <person name="Johnson S."/>
            <person name="Lee J."/>
            <person name="Lewis L."/>
            <person name="Liao D."/>
            <person name="Mark M.R."/>
            <person name="Robbie E."/>
            <person name="Sanchez C."/>
            <person name="Schoenfeld J."/>
            <person name="Seshagiri S."/>
            <person name="Simmons L."/>
            <person name="Singh J."/>
            <person name="Smith V."/>
            <person name="Stinson J."/>
            <person name="Vagts A."/>
            <person name="Vandlen R.L."/>
            <person name="Watanabe C."/>
            <person name="Wieand D."/>
            <person name="Woods K."/>
            <person name="Xie M.-H."/>
            <person name="Yansura D.G."/>
            <person name="Yi S."/>
            <person name="Yu G."/>
            <person name="Yuan J."/>
            <person name="Zhang M."/>
            <person name="Zhang Z."/>
            <person name="Goddard A.D."/>
            <person name="Wood W.I."/>
            <person name="Godowski P.J."/>
            <person name="Gray A.M."/>
        </authorList>
    </citation>
    <scope>NUCLEOTIDE SEQUENCE [LARGE SCALE MRNA]</scope>
</reference>
<reference key="8">
    <citation type="journal article" date="2004" name="Nat. Genet.">
        <title>Complete sequencing and characterization of 21,243 full-length human cDNAs.</title>
        <authorList>
            <person name="Ota T."/>
            <person name="Suzuki Y."/>
            <person name="Nishikawa T."/>
            <person name="Otsuki T."/>
            <person name="Sugiyama T."/>
            <person name="Irie R."/>
            <person name="Wakamatsu A."/>
            <person name="Hayashi K."/>
            <person name="Sato H."/>
            <person name="Nagai K."/>
            <person name="Kimura K."/>
            <person name="Makita H."/>
            <person name="Sekine M."/>
            <person name="Obayashi M."/>
            <person name="Nishi T."/>
            <person name="Shibahara T."/>
            <person name="Tanaka T."/>
            <person name="Ishii S."/>
            <person name="Yamamoto J."/>
            <person name="Saito K."/>
            <person name="Kawai Y."/>
            <person name="Isono Y."/>
            <person name="Nakamura Y."/>
            <person name="Nagahari K."/>
            <person name="Murakami K."/>
            <person name="Yasuda T."/>
            <person name="Iwayanagi T."/>
            <person name="Wagatsuma M."/>
            <person name="Shiratori A."/>
            <person name="Sudo H."/>
            <person name="Hosoiri T."/>
            <person name="Kaku Y."/>
            <person name="Kodaira H."/>
            <person name="Kondo H."/>
            <person name="Sugawara M."/>
            <person name="Takahashi M."/>
            <person name="Kanda K."/>
            <person name="Yokoi T."/>
            <person name="Furuya T."/>
            <person name="Kikkawa E."/>
            <person name="Omura Y."/>
            <person name="Abe K."/>
            <person name="Kamihara K."/>
            <person name="Katsuta N."/>
            <person name="Sato K."/>
            <person name="Tanikawa M."/>
            <person name="Yamazaki M."/>
            <person name="Ninomiya K."/>
            <person name="Ishibashi T."/>
            <person name="Yamashita H."/>
            <person name="Murakawa K."/>
            <person name="Fujimori K."/>
            <person name="Tanai H."/>
            <person name="Kimata M."/>
            <person name="Watanabe M."/>
            <person name="Hiraoka S."/>
            <person name="Chiba Y."/>
            <person name="Ishida S."/>
            <person name="Ono Y."/>
            <person name="Takiguchi S."/>
            <person name="Watanabe S."/>
            <person name="Yosida M."/>
            <person name="Hotuta T."/>
            <person name="Kusano J."/>
            <person name="Kanehori K."/>
            <person name="Takahashi-Fujii A."/>
            <person name="Hara H."/>
            <person name="Tanase T.-O."/>
            <person name="Nomura Y."/>
            <person name="Togiya S."/>
            <person name="Komai F."/>
            <person name="Hara R."/>
            <person name="Takeuchi K."/>
            <person name="Arita M."/>
            <person name="Imose N."/>
            <person name="Musashino K."/>
            <person name="Yuuki H."/>
            <person name="Oshima A."/>
            <person name="Sasaki N."/>
            <person name="Aotsuka S."/>
            <person name="Yoshikawa Y."/>
            <person name="Matsunawa H."/>
            <person name="Ichihara T."/>
            <person name="Shiohata N."/>
            <person name="Sano S."/>
            <person name="Moriya S."/>
            <person name="Momiyama H."/>
            <person name="Satoh N."/>
            <person name="Takami S."/>
            <person name="Terashima Y."/>
            <person name="Suzuki O."/>
            <person name="Nakagawa S."/>
            <person name="Senoh A."/>
            <person name="Mizoguchi H."/>
            <person name="Goto Y."/>
            <person name="Shimizu F."/>
            <person name="Wakebe H."/>
            <person name="Hishigaki H."/>
            <person name="Watanabe T."/>
            <person name="Sugiyama A."/>
            <person name="Takemoto M."/>
            <person name="Kawakami B."/>
            <person name="Yamazaki M."/>
            <person name="Watanabe K."/>
            <person name="Kumagai A."/>
            <person name="Itakura S."/>
            <person name="Fukuzumi Y."/>
            <person name="Fujimori Y."/>
            <person name="Komiyama M."/>
            <person name="Tashiro H."/>
            <person name="Tanigami A."/>
            <person name="Fujiwara T."/>
            <person name="Ono T."/>
            <person name="Yamada K."/>
            <person name="Fujii Y."/>
            <person name="Ozaki K."/>
            <person name="Hirao M."/>
            <person name="Ohmori Y."/>
            <person name="Kawabata A."/>
            <person name="Hikiji T."/>
            <person name="Kobatake N."/>
            <person name="Inagaki H."/>
            <person name="Ikema Y."/>
            <person name="Okamoto S."/>
            <person name="Okitani R."/>
            <person name="Kawakami T."/>
            <person name="Noguchi S."/>
            <person name="Itoh T."/>
            <person name="Shigeta K."/>
            <person name="Senba T."/>
            <person name="Matsumura K."/>
            <person name="Nakajima Y."/>
            <person name="Mizuno T."/>
            <person name="Morinaga M."/>
            <person name="Sasaki M."/>
            <person name="Togashi T."/>
            <person name="Oyama M."/>
            <person name="Hata H."/>
            <person name="Watanabe M."/>
            <person name="Komatsu T."/>
            <person name="Mizushima-Sugano J."/>
            <person name="Satoh T."/>
            <person name="Shirai Y."/>
            <person name="Takahashi Y."/>
            <person name="Nakagawa K."/>
            <person name="Okumura K."/>
            <person name="Nagase T."/>
            <person name="Nomura N."/>
            <person name="Kikuchi H."/>
            <person name="Masuho Y."/>
            <person name="Yamashita R."/>
            <person name="Nakai K."/>
            <person name="Yada T."/>
            <person name="Nakamura Y."/>
            <person name="Ohara O."/>
            <person name="Isogai T."/>
            <person name="Sugano S."/>
        </authorList>
    </citation>
    <scope>NUCLEOTIDE SEQUENCE [LARGE SCALE MRNA]</scope>
    <source>
        <tissue>Thalamus</tissue>
    </source>
</reference>
<reference key="9">
    <citation type="journal article" date="2005" name="Nature">
        <title>The DNA sequence of the human X chromosome.</title>
        <authorList>
            <person name="Ross M.T."/>
            <person name="Grafham D.V."/>
            <person name="Coffey A.J."/>
            <person name="Scherer S."/>
            <person name="McLay K."/>
            <person name="Muzny D."/>
            <person name="Platzer M."/>
            <person name="Howell G.R."/>
            <person name="Burrows C."/>
            <person name="Bird C.P."/>
            <person name="Frankish A."/>
            <person name="Lovell F.L."/>
            <person name="Howe K.L."/>
            <person name="Ashurst J.L."/>
            <person name="Fulton R.S."/>
            <person name="Sudbrak R."/>
            <person name="Wen G."/>
            <person name="Jones M.C."/>
            <person name="Hurles M.E."/>
            <person name="Andrews T.D."/>
            <person name="Scott C.E."/>
            <person name="Searle S."/>
            <person name="Ramser J."/>
            <person name="Whittaker A."/>
            <person name="Deadman R."/>
            <person name="Carter N.P."/>
            <person name="Hunt S.E."/>
            <person name="Chen R."/>
            <person name="Cree A."/>
            <person name="Gunaratne P."/>
            <person name="Havlak P."/>
            <person name="Hodgson A."/>
            <person name="Metzker M.L."/>
            <person name="Richards S."/>
            <person name="Scott G."/>
            <person name="Steffen D."/>
            <person name="Sodergren E."/>
            <person name="Wheeler D.A."/>
            <person name="Worley K.C."/>
            <person name="Ainscough R."/>
            <person name="Ambrose K.D."/>
            <person name="Ansari-Lari M.A."/>
            <person name="Aradhya S."/>
            <person name="Ashwell R.I."/>
            <person name="Babbage A.K."/>
            <person name="Bagguley C.L."/>
            <person name="Ballabio A."/>
            <person name="Banerjee R."/>
            <person name="Barker G.E."/>
            <person name="Barlow K.F."/>
            <person name="Barrett I.P."/>
            <person name="Bates K.N."/>
            <person name="Beare D.M."/>
            <person name="Beasley H."/>
            <person name="Beasley O."/>
            <person name="Beck A."/>
            <person name="Bethel G."/>
            <person name="Blechschmidt K."/>
            <person name="Brady N."/>
            <person name="Bray-Allen S."/>
            <person name="Bridgeman A.M."/>
            <person name="Brown A.J."/>
            <person name="Brown M.J."/>
            <person name="Bonnin D."/>
            <person name="Bruford E.A."/>
            <person name="Buhay C."/>
            <person name="Burch P."/>
            <person name="Burford D."/>
            <person name="Burgess J."/>
            <person name="Burrill W."/>
            <person name="Burton J."/>
            <person name="Bye J.M."/>
            <person name="Carder C."/>
            <person name="Carrel L."/>
            <person name="Chako J."/>
            <person name="Chapman J.C."/>
            <person name="Chavez D."/>
            <person name="Chen E."/>
            <person name="Chen G."/>
            <person name="Chen Y."/>
            <person name="Chen Z."/>
            <person name="Chinault C."/>
            <person name="Ciccodicola A."/>
            <person name="Clark S.Y."/>
            <person name="Clarke G."/>
            <person name="Clee C.M."/>
            <person name="Clegg S."/>
            <person name="Clerc-Blankenburg K."/>
            <person name="Clifford K."/>
            <person name="Cobley V."/>
            <person name="Cole C.G."/>
            <person name="Conquer J.S."/>
            <person name="Corby N."/>
            <person name="Connor R.E."/>
            <person name="David R."/>
            <person name="Davies J."/>
            <person name="Davis C."/>
            <person name="Davis J."/>
            <person name="Delgado O."/>
            <person name="Deshazo D."/>
            <person name="Dhami P."/>
            <person name="Ding Y."/>
            <person name="Dinh H."/>
            <person name="Dodsworth S."/>
            <person name="Draper H."/>
            <person name="Dugan-Rocha S."/>
            <person name="Dunham A."/>
            <person name="Dunn M."/>
            <person name="Durbin K.J."/>
            <person name="Dutta I."/>
            <person name="Eades T."/>
            <person name="Ellwood M."/>
            <person name="Emery-Cohen A."/>
            <person name="Errington H."/>
            <person name="Evans K.L."/>
            <person name="Faulkner L."/>
            <person name="Francis F."/>
            <person name="Frankland J."/>
            <person name="Fraser A.E."/>
            <person name="Galgoczy P."/>
            <person name="Gilbert J."/>
            <person name="Gill R."/>
            <person name="Gloeckner G."/>
            <person name="Gregory S.G."/>
            <person name="Gribble S."/>
            <person name="Griffiths C."/>
            <person name="Grocock R."/>
            <person name="Gu Y."/>
            <person name="Gwilliam R."/>
            <person name="Hamilton C."/>
            <person name="Hart E.A."/>
            <person name="Hawes A."/>
            <person name="Heath P.D."/>
            <person name="Heitmann K."/>
            <person name="Hennig S."/>
            <person name="Hernandez J."/>
            <person name="Hinzmann B."/>
            <person name="Ho S."/>
            <person name="Hoffs M."/>
            <person name="Howden P.J."/>
            <person name="Huckle E.J."/>
            <person name="Hume J."/>
            <person name="Hunt P.J."/>
            <person name="Hunt A.R."/>
            <person name="Isherwood J."/>
            <person name="Jacob L."/>
            <person name="Johnson D."/>
            <person name="Jones S."/>
            <person name="de Jong P.J."/>
            <person name="Joseph S.S."/>
            <person name="Keenan S."/>
            <person name="Kelly S."/>
            <person name="Kershaw J.K."/>
            <person name="Khan Z."/>
            <person name="Kioschis P."/>
            <person name="Klages S."/>
            <person name="Knights A.J."/>
            <person name="Kosiura A."/>
            <person name="Kovar-Smith C."/>
            <person name="Laird G.K."/>
            <person name="Langford C."/>
            <person name="Lawlor S."/>
            <person name="Leversha M."/>
            <person name="Lewis L."/>
            <person name="Liu W."/>
            <person name="Lloyd C."/>
            <person name="Lloyd D.M."/>
            <person name="Loulseged H."/>
            <person name="Loveland J.E."/>
            <person name="Lovell J.D."/>
            <person name="Lozado R."/>
            <person name="Lu J."/>
            <person name="Lyne R."/>
            <person name="Ma J."/>
            <person name="Maheshwari M."/>
            <person name="Matthews L.H."/>
            <person name="McDowall J."/>
            <person name="McLaren S."/>
            <person name="McMurray A."/>
            <person name="Meidl P."/>
            <person name="Meitinger T."/>
            <person name="Milne S."/>
            <person name="Miner G."/>
            <person name="Mistry S.L."/>
            <person name="Morgan M."/>
            <person name="Morris S."/>
            <person name="Mueller I."/>
            <person name="Mullikin J.C."/>
            <person name="Nguyen N."/>
            <person name="Nordsiek G."/>
            <person name="Nyakatura G."/>
            <person name="O'dell C.N."/>
            <person name="Okwuonu G."/>
            <person name="Palmer S."/>
            <person name="Pandian R."/>
            <person name="Parker D."/>
            <person name="Parrish J."/>
            <person name="Pasternak S."/>
            <person name="Patel D."/>
            <person name="Pearce A.V."/>
            <person name="Pearson D.M."/>
            <person name="Pelan S.E."/>
            <person name="Perez L."/>
            <person name="Porter K.M."/>
            <person name="Ramsey Y."/>
            <person name="Reichwald K."/>
            <person name="Rhodes S."/>
            <person name="Ridler K.A."/>
            <person name="Schlessinger D."/>
            <person name="Schueler M.G."/>
            <person name="Sehra H.K."/>
            <person name="Shaw-Smith C."/>
            <person name="Shen H."/>
            <person name="Sheridan E.M."/>
            <person name="Shownkeen R."/>
            <person name="Skuce C.D."/>
            <person name="Smith M.L."/>
            <person name="Sotheran E.C."/>
            <person name="Steingruber H.E."/>
            <person name="Steward C.A."/>
            <person name="Storey R."/>
            <person name="Swann R.M."/>
            <person name="Swarbreck D."/>
            <person name="Tabor P.E."/>
            <person name="Taudien S."/>
            <person name="Taylor T."/>
            <person name="Teague B."/>
            <person name="Thomas K."/>
            <person name="Thorpe A."/>
            <person name="Timms K."/>
            <person name="Tracey A."/>
            <person name="Trevanion S."/>
            <person name="Tromans A.C."/>
            <person name="d'Urso M."/>
            <person name="Verduzco D."/>
            <person name="Villasana D."/>
            <person name="Waldron L."/>
            <person name="Wall M."/>
            <person name="Wang Q."/>
            <person name="Warren J."/>
            <person name="Warry G.L."/>
            <person name="Wei X."/>
            <person name="West A."/>
            <person name="Whitehead S.L."/>
            <person name="Whiteley M.N."/>
            <person name="Wilkinson J.E."/>
            <person name="Willey D.L."/>
            <person name="Williams G."/>
            <person name="Williams L."/>
            <person name="Williamson A."/>
            <person name="Williamson H."/>
            <person name="Wilming L."/>
            <person name="Woodmansey R.L."/>
            <person name="Wray P.W."/>
            <person name="Yen J."/>
            <person name="Zhang J."/>
            <person name="Zhou J."/>
            <person name="Zoghbi H."/>
            <person name="Zorilla S."/>
            <person name="Buck D."/>
            <person name="Reinhardt R."/>
            <person name="Poustka A."/>
            <person name="Rosenthal A."/>
            <person name="Lehrach H."/>
            <person name="Meindl A."/>
            <person name="Minx P.J."/>
            <person name="Hillier L.W."/>
            <person name="Willard H.F."/>
            <person name="Wilson R.K."/>
            <person name="Waterston R.H."/>
            <person name="Rice C.M."/>
            <person name="Vaudin M."/>
            <person name="Coulson A."/>
            <person name="Nelson D.L."/>
            <person name="Weinstock G."/>
            <person name="Sulston J.E."/>
            <person name="Durbin R.M."/>
            <person name="Hubbard T."/>
            <person name="Gibbs R.A."/>
            <person name="Beck S."/>
            <person name="Rogers J."/>
            <person name="Bentley D.R."/>
        </authorList>
    </citation>
    <scope>NUCLEOTIDE SEQUENCE [LARGE SCALE GENOMIC DNA]</scope>
</reference>
<reference key="10">
    <citation type="submission" date="2005-09" db="EMBL/GenBank/DDBJ databases">
        <authorList>
            <person name="Mural R.J."/>
            <person name="Istrail S."/>
            <person name="Sutton G.G."/>
            <person name="Florea L."/>
            <person name="Halpern A.L."/>
            <person name="Mobarry C.M."/>
            <person name="Lippert R."/>
            <person name="Walenz B."/>
            <person name="Shatkay H."/>
            <person name="Dew I."/>
            <person name="Miller J.R."/>
            <person name="Flanigan M.J."/>
            <person name="Edwards N.J."/>
            <person name="Bolanos R."/>
            <person name="Fasulo D."/>
            <person name="Halldorsson B.V."/>
            <person name="Hannenhalli S."/>
            <person name="Turner R."/>
            <person name="Yooseph S."/>
            <person name="Lu F."/>
            <person name="Nusskern D.R."/>
            <person name="Shue B.C."/>
            <person name="Zheng X.H."/>
            <person name="Zhong F."/>
            <person name="Delcher A.L."/>
            <person name="Huson D.H."/>
            <person name="Kravitz S.A."/>
            <person name="Mouchard L."/>
            <person name="Reinert K."/>
            <person name="Remington K.A."/>
            <person name="Clark A.G."/>
            <person name="Waterman M.S."/>
            <person name="Eichler E.E."/>
            <person name="Adams M.D."/>
            <person name="Hunkapiller M.W."/>
            <person name="Myers E.W."/>
            <person name="Venter J.C."/>
        </authorList>
    </citation>
    <scope>NUCLEOTIDE SEQUENCE [LARGE SCALE GENOMIC DNA]</scope>
</reference>
<reference key="11">
    <citation type="journal article" date="2004" name="Genome Res.">
        <title>The status, quality, and expansion of the NIH full-length cDNA project: the Mammalian Gene Collection (MGC).</title>
        <authorList>
            <consortium name="The MGC Project Team"/>
        </authorList>
    </citation>
    <scope>NUCLEOTIDE SEQUENCE [LARGE SCALE MRNA]</scope>
    <source>
        <tissue>Eye</tissue>
        <tissue>Ovary</tissue>
    </source>
</reference>
<reference key="12">
    <citation type="journal article" date="2005" name="Nature">
        <title>Protein glycosylation: chaperone mutation in Tn syndrome.</title>
        <authorList>
            <person name="Ju T."/>
            <person name="Cummings R.D."/>
        </authorList>
    </citation>
    <scope>VARIANT TNPS LYS-152</scope>
    <scope>VARIANT GLU-131</scope>
    <scope>CHARACTERIZATION OF VARIANT TNPS LYS-152</scope>
    <scope>CHARACTERIZATION OF VARIANT GLU-131</scope>
</reference>
<reference key="13">
    <citation type="journal article" date="2006" name="Science">
        <title>A mutant chaperone converts a wild-type protein into a tumor-specific antigen.</title>
        <authorList>
            <person name="Schietinger A."/>
            <person name="Philip M."/>
            <person name="Yoshida B.A."/>
            <person name="Azadi P."/>
            <person name="Liu H."/>
            <person name="Meredith S.C."/>
            <person name="Schreiber H."/>
        </authorList>
    </citation>
    <scope>INVOLVEMENT IN PRODUCTION OF TUMOR-SPECIFIC ANTIGEN</scope>
</reference>
<reference key="14">
    <citation type="journal article" date="2023" name="Eur. J. Hum. Genet.">
        <title>X-linked C1GALT1C1 mutation causes atypical hemolytic uremic syndrome.</title>
        <authorList>
            <person name="Hadar N."/>
            <person name="Schreiber R."/>
            <person name="Eskin-Schwartz M."/>
            <person name="Kristal E."/>
            <person name="Shubinsky G."/>
            <person name="Ling G."/>
            <person name="Cohen I."/>
            <person name="Geylis M."/>
            <person name="Nahum A."/>
            <person name="Yogev Y."/>
            <person name="Birk O.S."/>
        </authorList>
    </citation>
    <scope>INVOLVEMENT IN AHUS8</scope>
    <scope>VARIANT AHUS8 ILE-89</scope>
</reference>
<reference key="15">
    <citation type="journal article" date="2008" name="Br. J. Haematol.">
        <title>New mutations in C1GALT1C1 in individuals with Tn positive phenotype.</title>
        <authorList>
            <person name="Crew V.K."/>
            <person name="Singleton B.K."/>
            <person name="Green C."/>
            <person name="Parsons S.F."/>
            <person name="Daniels G."/>
            <person name="Anstee D.J."/>
        </authorList>
    </citation>
    <scope>VARIANTS GLU-131; VAL-143 AND HIS-222</scope>
    <scope>VARIANTS TNPS LYS-152 AND PRO-193</scope>
</reference>
<reference key="16">
    <citation type="journal article" date="2023" name="Proc. Natl. Acad. Sci. U.S.A.">
        <title>Germline C1GALT1C1 mutation causes a multisystem chaperonopathy.</title>
        <authorList>
            <person name="Erger F."/>
            <person name="Aryal R.P."/>
            <person name="Reusch B."/>
            <person name="Matsumoto Y."/>
            <person name="Meyer R."/>
            <person name="Zeng J."/>
            <person name="Knopp C."/>
            <person name="Noel M."/>
            <person name="Muerner L."/>
            <person name="Wenzel A."/>
            <person name="Kohl S."/>
            <person name="Tschernoster N."/>
            <person name="Rappl G."/>
            <person name="Rouvet I."/>
            <person name="Schroeder-Braunstein J."/>
            <person name="Seibert F.S."/>
            <person name="Thiele H."/>
            <person name="Haeusler M.G."/>
            <person name="Weber L.T."/>
            <person name="Buettner-Herold M."/>
            <person name="Elbracht M."/>
            <person name="Cummings S.F."/>
            <person name="Altmueller J."/>
            <person name="Habbig S."/>
            <person name="Cummings R.D."/>
            <person name="Beck B.B."/>
        </authorList>
    </citation>
    <scope>VARIANT AHUS8 ASP-20</scope>
    <scope>CHARACTERIZATION OF VARIANT AHUS8 ASP-20</scope>
    <scope>FUNCTION</scope>
</reference>
<comment type="function">
    <text evidence="3 7">Probable chaperone required for the generation of 1 O-glycan Gal-beta1-3GalNAc-alpha1-Ser/Thr (T antigen), which is a precursor for many extended O-glycans in glycoproteins. Probably acts as a specific molecular chaperone assisting the folding/stability of core 1 beta-3-galactosyltransferase (C1GALT1).</text>
</comment>
<comment type="subunit">
    <text>Associates with core 1 beta-3-galactosyltransferase (C1GALT1), probably not with the soluble active form.</text>
</comment>
<comment type="interaction">
    <interactant intactId="EBI-2837343">
        <id>Q96EU7</id>
    </interactant>
    <interactant intactId="EBI-8628584">
        <id>Q9NS00</id>
        <label>C1GALT1</label>
    </interactant>
    <organismsDiffer>false</organismsDiffer>
    <experiments>4</experiments>
</comment>
<comment type="subcellular location">
    <subcellularLocation>
        <location evidence="8">Membrane</location>
        <topology evidence="8">Single-pass type II membrane protein</topology>
    </subcellularLocation>
</comment>
<comment type="tissue specificity">
    <text evidence="2">Ubiquitously expressed. Abundantly expressed in salivary gland, stomach, small intestine, kidney, and testis and at intermediate levels in whole brain, cerebellum, spinal cord, thymus, spleen, trachea, lung, pancreas, ovary, and uterus.</text>
</comment>
<comment type="disease" evidence="4 5">
    <disease id="DI-02372">
        <name>Tn polyagglutination syndrome</name>
        <acronym>TNPS</acronym>
        <description>A clonal disorder characterized by the polyagglutination of red blood cells by naturally occurring anti-Tn antibodies following exposure of the Tn antigen on the surface of erythrocytes. Only a subset of red cells express the antigen, which can also be expressed on platelets and leukocytes. This condition may occur in healthy individuals who manifest asymptomatic anemia, leukopenia, or thrombocytopenia. However, there is also an association between the Tn antigen and leukemia or myelodysplastic disorders.</description>
        <dbReference type="MIM" id="300622"/>
    </disease>
    <text>The disease is caused by variants affecting the gene represented in this entry.</text>
</comment>
<comment type="disease" evidence="6 7">
    <disease id="DI-06713">
        <name>Hemolytic uremic syndrome, atypical, 8, with rhizomelic short stature</name>
        <acronym>AHUS8</acronym>
        <description>An X-linked, atypical form of hemolytic uremic syndrome, characterized by microangiopathic hemolytic anemia, thrombocytopenia, renal failure and absence of episodes of enterocolitis and diarrhea. In contrast to typical hemolytic uremic syndrome, atypical forms have a poorer prognosis, with higher death rates and frequent progression to end-stage renal disease. AHUS8 patients have short stature with short limbs, in addition to acute renal dysfunction with proteinuria, thrombotic microangiopathy, anemia, thrombocytopenia, increased serum lactate dehydrogenase, and schistocytes on peripheral blood smear. More variable features include immunodeficiency with recurrent infections, developmental delay, and dysmorphic features. The age at onset of renal symptoms is variable, ranging from infancy to the early twenties. Female carriers may be mildly affected.</description>
        <dbReference type="MIM" id="301110"/>
    </disease>
    <text>The disease is caused by variants affecting the gene represented in this entry.</text>
</comment>
<comment type="miscellaneous">
    <text>Defects in C1GALT1C1 in Ag104A cell line create a tumor-specific glycopeptidic neo-epitope. This epitope induces a high-affinity, highly specific, syngeneic monoclonal antibody. This is caused by the abolition of function of a glycosyltransferase, disrupting O-glycan Core 1 synthesis.</text>
</comment>
<comment type="similarity">
    <text evidence="8">Belongs to the glycosyltransferase 31 family. Beta3-Gal-T subfamily.</text>
</comment>
<comment type="caution">
    <text evidence="9">Was originally (PubMed:12361956) assigned to be a glycosyltransferase. However, it was later shown (Ref.2 and PubMed:12464682) that it has no transferase activity and rather acts as a chaperone.</text>
</comment>
<comment type="sequence caution" evidence="8">
    <conflict type="frameshift">
        <sequence resource="EMBL-CDS" id="AAF29039"/>
    </conflict>
</comment>
<comment type="sequence caution" evidence="8">
    <conflict type="erroneous initiation">
        <sequence resource="EMBL-CDS" id="CAC80277"/>
    </conflict>
    <text>Truncated N-terminus.</text>
</comment>
<comment type="online information" name="Functional Glycomics Gateway - GTase">
    <link uri="http://www.functionalglycomics.org/glycomics/molecule/jsp/glycoEnzyme/viewGlycoEnzyme.jsp?gbpId=gt_hum_443"/>
    <text>C1GALT1-specific chaperone 1</text>
</comment>
<organism>
    <name type="scientific">Homo sapiens</name>
    <name type="common">Human</name>
    <dbReference type="NCBI Taxonomy" id="9606"/>
    <lineage>
        <taxon>Eukaryota</taxon>
        <taxon>Metazoa</taxon>
        <taxon>Chordata</taxon>
        <taxon>Craniata</taxon>
        <taxon>Vertebrata</taxon>
        <taxon>Euteleostomi</taxon>
        <taxon>Mammalia</taxon>
        <taxon>Eutheria</taxon>
        <taxon>Euarchontoglires</taxon>
        <taxon>Primates</taxon>
        <taxon>Haplorrhini</taxon>
        <taxon>Catarrhini</taxon>
        <taxon>Hominidae</taxon>
        <taxon>Homo</taxon>
    </lineage>
</organism>
<protein>
    <recommendedName>
        <fullName>C1GALT1-specific chaperone 1</fullName>
    </recommendedName>
    <alternativeName>
        <fullName>C38H2-like protein 1</fullName>
        <shortName>C38H2-L1</shortName>
    </alternativeName>
    <alternativeName>
        <fullName>Core 1 beta1,3-galactosyltransferase 2</fullName>
        <shortName>C1Gal-T2</shortName>
        <shortName>C1GalT2</shortName>
        <shortName>Core 1 beta3-Gal-T2</shortName>
    </alternativeName>
    <alternativeName>
        <fullName>Core 1 beta3-galactosyltransferase-specific molecular chaperone</fullName>
    </alternativeName>
</protein>
<proteinExistence type="evidence at protein level"/>
<accession>Q96EU7</accession>
<accession>A8K246</accession>
<accession>Q8WWS3</accession>
<accession>Q9NZX1</accession>
<name>C1GLC_HUMAN</name>
<sequence>MLSESSSFLKGVMLGSIFCALITMLGHIRIGHGNRMHHHEHHHLQAPNKEDILKISEDERMELSKSFRVYCIILVKPKDVSLWAAVKETWTKHCDKAEFFSSENVKVFESINMDTNDMWLMMRKAYKYAFDKYRDQYNWFFLARPTTFAIIENLKYFLLKKDPSQPFYLGHTIKSGDLEYVGMEGGIVLSVESMKRLNSLLNIPEKCPEQGGMIWKISEDKQLAVCLKYAGVFAENAEDADGKDVFNTKSVGLSIKEAMTYHPNQVVEGCCSDMAVTFNGLTPNQMHVMMYGVYRLRAFGHIFNDALVFLPPNGSDND</sequence>
<evidence type="ECO:0000255" key="1"/>
<evidence type="ECO:0000269" key="2">
    <source>
    </source>
</evidence>
<evidence type="ECO:0000269" key="3">
    <source>
    </source>
</evidence>
<evidence type="ECO:0000269" key="4">
    <source>
    </source>
</evidence>
<evidence type="ECO:0000269" key="5">
    <source>
    </source>
</evidence>
<evidence type="ECO:0000269" key="6">
    <source>
    </source>
</evidence>
<evidence type="ECO:0000269" key="7">
    <source>
    </source>
</evidence>
<evidence type="ECO:0000305" key="8"/>
<evidence type="ECO:0000305" key="9">
    <source>
    </source>
</evidence>
<gene>
    <name type="primary">C1GALT1C1</name>
    <name type="synonym">COSMC</name>
    <name type="ORF">HSPC067</name>
    <name type="ORF">MSTP143</name>
    <name type="ORF">UNQ273/PRO310</name>
</gene>
<dbReference type="EMBL" id="AB084170">
    <property type="protein sequence ID" value="BAC41493.1"/>
    <property type="molecule type" value="mRNA"/>
</dbReference>
<dbReference type="EMBL" id="AY159319">
    <property type="protein sequence ID" value="AAN78129.1"/>
    <property type="molecule type" value="mRNA"/>
</dbReference>
<dbReference type="EMBL" id="AJ238398">
    <property type="protein sequence ID" value="CAC80277.1"/>
    <property type="status" value="ALT_INIT"/>
    <property type="molecule type" value="mRNA"/>
</dbReference>
<dbReference type="EMBL" id="AF161552">
    <property type="protein sequence ID" value="AAF29039.1"/>
    <property type="status" value="ALT_FRAME"/>
    <property type="molecule type" value="mRNA"/>
</dbReference>
<dbReference type="EMBL" id="AF177284">
    <property type="protein sequence ID" value="AAQ13670.1"/>
    <property type="molecule type" value="mRNA"/>
</dbReference>
<dbReference type="EMBL" id="AY358642">
    <property type="protein sequence ID" value="AAQ89005.1"/>
    <property type="molecule type" value="mRNA"/>
</dbReference>
<dbReference type="EMBL" id="AC011890">
    <property type="status" value="NOT_ANNOTATED_CDS"/>
    <property type="molecule type" value="Genomic_DNA"/>
</dbReference>
<dbReference type="EMBL" id="AK290111">
    <property type="protein sequence ID" value="BAF82800.1"/>
    <property type="molecule type" value="mRNA"/>
</dbReference>
<dbReference type="EMBL" id="CH471107">
    <property type="protein sequence ID" value="EAX11873.1"/>
    <property type="molecule type" value="Genomic_DNA"/>
</dbReference>
<dbReference type="EMBL" id="BC011930">
    <property type="protein sequence ID" value="AAH11930.1"/>
    <property type="molecule type" value="mRNA"/>
</dbReference>
<dbReference type="EMBL" id="BC050441">
    <property type="protein sequence ID" value="AAH50441.1"/>
    <property type="molecule type" value="mRNA"/>
</dbReference>
<dbReference type="CCDS" id="CCDS14602.1"/>
<dbReference type="RefSeq" id="NP_001011551.1">
    <property type="nucleotide sequence ID" value="NM_001011551.3"/>
</dbReference>
<dbReference type="RefSeq" id="NP_689905.1">
    <property type="nucleotide sequence ID" value="NM_152692.5"/>
</dbReference>
<dbReference type="SMR" id="Q96EU7"/>
<dbReference type="BioGRID" id="118844">
    <property type="interactions" value="35"/>
</dbReference>
<dbReference type="FunCoup" id="Q96EU7">
    <property type="interactions" value="406"/>
</dbReference>
<dbReference type="IntAct" id="Q96EU7">
    <property type="interactions" value="22"/>
</dbReference>
<dbReference type="MINT" id="Q96EU7"/>
<dbReference type="STRING" id="9606.ENSP00000304364"/>
<dbReference type="CAZy" id="GT31">
    <property type="family name" value="Glycosyltransferase Family 31"/>
</dbReference>
<dbReference type="GlyGen" id="Q96EU7">
    <property type="glycosylation" value="1 site"/>
</dbReference>
<dbReference type="iPTMnet" id="Q96EU7"/>
<dbReference type="PhosphoSitePlus" id="Q96EU7"/>
<dbReference type="BioMuta" id="C1GALT1C1"/>
<dbReference type="DMDM" id="74751849"/>
<dbReference type="jPOST" id="Q96EU7"/>
<dbReference type="MassIVE" id="Q96EU7"/>
<dbReference type="PaxDb" id="9606-ENSP00000304364"/>
<dbReference type="PeptideAtlas" id="Q96EU7"/>
<dbReference type="ProteomicsDB" id="76452"/>
<dbReference type="Pumba" id="Q96EU7"/>
<dbReference type="Antibodypedia" id="545">
    <property type="antibodies" value="88 antibodies from 25 providers"/>
</dbReference>
<dbReference type="DNASU" id="29071"/>
<dbReference type="Ensembl" id="ENST00000304661.6">
    <property type="protein sequence ID" value="ENSP00000304364.5"/>
    <property type="gene ID" value="ENSG00000171155.8"/>
</dbReference>
<dbReference type="Ensembl" id="ENST00000371313.2">
    <property type="protein sequence ID" value="ENSP00000360363.2"/>
    <property type="gene ID" value="ENSG00000171155.8"/>
</dbReference>
<dbReference type="Ensembl" id="ENST00000673177.1">
    <property type="protein sequence ID" value="ENSP00000500356.1"/>
    <property type="gene ID" value="ENSG00000288368.1"/>
</dbReference>
<dbReference type="Ensembl" id="ENST00000673568.1">
    <property type="protein sequence ID" value="ENSP00000500561.1"/>
    <property type="gene ID" value="ENSG00000288368.1"/>
</dbReference>
<dbReference type="GeneID" id="29071"/>
<dbReference type="KEGG" id="hsa:29071"/>
<dbReference type="MANE-Select" id="ENST00000304661.6">
    <property type="protein sequence ID" value="ENSP00000304364.5"/>
    <property type="RefSeq nucleotide sequence ID" value="NM_001011551.3"/>
    <property type="RefSeq protein sequence ID" value="NP_001011551.1"/>
</dbReference>
<dbReference type="UCSC" id="uc004esy.4">
    <property type="organism name" value="human"/>
</dbReference>
<dbReference type="AGR" id="HGNC:24338"/>
<dbReference type="CTD" id="29071"/>
<dbReference type="DisGeNET" id="29071"/>
<dbReference type="GeneCards" id="C1GALT1C1"/>
<dbReference type="HGNC" id="HGNC:24338">
    <property type="gene designation" value="C1GALT1C1"/>
</dbReference>
<dbReference type="HPA" id="ENSG00000171155">
    <property type="expression patterns" value="Low tissue specificity"/>
</dbReference>
<dbReference type="MalaCards" id="C1GALT1C1"/>
<dbReference type="MIM" id="300611">
    <property type="type" value="gene"/>
</dbReference>
<dbReference type="MIM" id="300622">
    <property type="type" value="phenotype"/>
</dbReference>
<dbReference type="MIM" id="301110">
    <property type="type" value="phenotype"/>
</dbReference>
<dbReference type="neXtProt" id="NX_Q96EU7"/>
<dbReference type="OpenTargets" id="ENSG00000171155"/>
<dbReference type="PharmGKB" id="PA134974626"/>
<dbReference type="VEuPathDB" id="HostDB:ENSG00000171155"/>
<dbReference type="eggNOG" id="KOG2246">
    <property type="taxonomic scope" value="Eukaryota"/>
</dbReference>
<dbReference type="GeneTree" id="ENSGT00940000155145"/>
<dbReference type="HOGENOM" id="CLU_874237_0_0_1"/>
<dbReference type="InParanoid" id="Q96EU7"/>
<dbReference type="OMA" id="WVMMRKA"/>
<dbReference type="OrthoDB" id="414175at2759"/>
<dbReference type="PAN-GO" id="Q96EU7">
    <property type="GO annotations" value="2 GO annotations based on evolutionary models"/>
</dbReference>
<dbReference type="PhylomeDB" id="Q96EU7"/>
<dbReference type="TreeFam" id="TF317293"/>
<dbReference type="BRENDA" id="2.4.1.122">
    <property type="organism ID" value="2681"/>
</dbReference>
<dbReference type="PathwayCommons" id="Q96EU7"/>
<dbReference type="Reactome" id="R-HSA-5083632">
    <property type="pathway name" value="Defective C1GALT1C1 causes TNPS"/>
</dbReference>
<dbReference type="Reactome" id="R-HSA-913709">
    <property type="pathway name" value="O-linked glycosylation of mucins"/>
</dbReference>
<dbReference type="SignaLink" id="Q96EU7"/>
<dbReference type="BioGRID-ORCS" id="29071">
    <property type="hits" value="20 hits in 776 CRISPR screens"/>
</dbReference>
<dbReference type="ChiTaRS" id="C1GALT1C1">
    <property type="organism name" value="human"/>
</dbReference>
<dbReference type="GenomeRNAi" id="29071"/>
<dbReference type="Pharos" id="Q96EU7">
    <property type="development level" value="Tbio"/>
</dbReference>
<dbReference type="PRO" id="PR:Q96EU7"/>
<dbReference type="Proteomes" id="UP000005640">
    <property type="component" value="Chromosome X"/>
</dbReference>
<dbReference type="RNAct" id="Q96EU7">
    <property type="molecule type" value="protein"/>
</dbReference>
<dbReference type="Bgee" id="ENSG00000171155">
    <property type="expression patterns" value="Expressed in islet of Langerhans and 100 other cell types or tissues"/>
</dbReference>
<dbReference type="GO" id="GO:0070062">
    <property type="term" value="C:extracellular exosome"/>
    <property type="evidence" value="ECO:0007005"/>
    <property type="project" value="UniProtKB"/>
</dbReference>
<dbReference type="GO" id="GO:0000139">
    <property type="term" value="C:Golgi membrane"/>
    <property type="evidence" value="ECO:0000304"/>
    <property type="project" value="Reactome"/>
</dbReference>
<dbReference type="GO" id="GO:0030168">
    <property type="term" value="P:platelet activation"/>
    <property type="evidence" value="ECO:0007669"/>
    <property type="project" value="Ensembl"/>
</dbReference>
<dbReference type="GO" id="GO:0036344">
    <property type="term" value="P:platelet morphogenesis"/>
    <property type="evidence" value="ECO:0007669"/>
    <property type="project" value="Ensembl"/>
</dbReference>
<dbReference type="GO" id="GO:0006493">
    <property type="term" value="P:protein O-linked glycosylation"/>
    <property type="evidence" value="ECO:0000315"/>
    <property type="project" value="UniProtKB"/>
</dbReference>
<dbReference type="FunFam" id="3.90.550.50:FF:000016">
    <property type="entry name" value="C1GALT1-specific chaperone 1"/>
    <property type="match status" value="1"/>
</dbReference>
<dbReference type="Gene3D" id="3.90.550.50">
    <property type="match status" value="1"/>
</dbReference>
<dbReference type="InterPro" id="IPR026050">
    <property type="entry name" value="C1GALT1/C1GALT1_chp1"/>
</dbReference>
<dbReference type="PANTHER" id="PTHR23033">
    <property type="entry name" value="BETA1,3-GALACTOSYLTRANSFERASE"/>
    <property type="match status" value="1"/>
</dbReference>
<dbReference type="PANTHER" id="PTHR23033:SF2">
    <property type="entry name" value="C1GALT1-SPECIFIC CHAPERONE 1"/>
    <property type="match status" value="1"/>
</dbReference>
<feature type="chain" id="PRO_0000285074" description="C1GALT1-specific chaperone 1">
    <location>
        <begin position="1"/>
        <end position="318"/>
    </location>
</feature>
<feature type="topological domain" description="Cytoplasmic" evidence="1">
    <location>
        <begin position="1"/>
        <end position="6"/>
    </location>
</feature>
<feature type="transmembrane region" description="Helical; Signal-anchor for type II membrane protein" evidence="1">
    <location>
        <begin position="7"/>
        <end position="26"/>
    </location>
</feature>
<feature type="topological domain" description="Lumenal" evidence="1">
    <location>
        <begin position="27"/>
        <end position="318"/>
    </location>
</feature>
<feature type="sequence variant" id="VAR_088735" description="In AHUS8; likely pathogenic; decreased function in protein O-linked glycosylation; decreased protein abundance in patient lymphoblastoid cells; increased protein degradation by the proteasome-dependent pathway." evidence="7">
    <original>A</original>
    <variation>D</variation>
    <location>
        <position position="20"/>
    </location>
</feature>
<feature type="sequence variant" id="VAR_088736" description="In AHUS8; likely pathogenic." evidence="6">
    <original>T</original>
    <variation>I</variation>
    <location>
        <position position="89"/>
    </location>
</feature>
<feature type="sequence variant" id="VAR_031910" description="Retains capacity to promote Tn synthase activity; dbSNP:rs17261572." evidence="4 5">
    <original>D</original>
    <variation>E</variation>
    <location>
        <position position="131"/>
    </location>
</feature>
<feature type="sequence variant" id="VAR_069274" description="In dbSNP:rs45557031." evidence="5">
    <original>A</original>
    <variation>V</variation>
    <location>
        <position position="143"/>
    </location>
</feature>
<feature type="sequence variant" id="VAR_031911" description="In TNPS; loss capacity to promote Tn synthase activity; dbSNP:rs137853599." evidence="4 5">
    <original>E</original>
    <variation>K</variation>
    <location>
        <position position="152"/>
    </location>
</feature>
<feature type="sequence variant" id="VAR_069275" description="In TNPS; dbSNP:rs397514537." evidence="5">
    <original>S</original>
    <variation>P</variation>
    <location>
        <position position="193"/>
    </location>
</feature>
<feature type="sequence variant" id="VAR_069276" description="In dbSNP:rs200973382." evidence="5">
    <original>Q</original>
    <variation>H</variation>
    <location>
        <position position="222"/>
    </location>
</feature>
<feature type="sequence conflict" description="In Ref. 4; CAC80277." evidence="8" ref="4">
    <original>K</original>
    <variation>E</variation>
    <location>
        <position position="76"/>
    </location>
</feature>
<feature type="sequence conflict" description="In Ref. 5; AAF29039." evidence="8" ref="5">
    <original>V</original>
    <variation>E</variation>
    <location>
        <position position="107"/>
    </location>
</feature>
<feature type="sequence conflict" description="In Ref. 4; CAC80277." evidence="8" ref="4">
    <original>F</original>
    <variation>L</variation>
    <location>
        <position position="108"/>
    </location>
</feature>
<keyword id="KW-0143">Chaperone</keyword>
<keyword id="KW-0225">Disease variant</keyword>
<keyword id="KW-1068">Hemolytic uremic syndrome</keyword>
<keyword id="KW-0472">Membrane</keyword>
<keyword id="KW-1267">Proteomics identification</keyword>
<keyword id="KW-1185">Reference proteome</keyword>
<keyword id="KW-0735">Signal-anchor</keyword>
<keyword id="KW-0812">Transmembrane</keyword>
<keyword id="KW-1133">Transmembrane helix</keyword>